<protein>
    <recommendedName>
        <fullName>Eukaryotic translation initiation factor 5A-1</fullName>
        <shortName>eIF-5A-1</shortName>
    </recommendedName>
    <alternativeName>
        <fullName>Initiation factor five protein 1</fullName>
    </alternativeName>
</protein>
<organism>
    <name type="scientific">Caenorhabditis elegans</name>
    <dbReference type="NCBI Taxonomy" id="6239"/>
    <lineage>
        <taxon>Eukaryota</taxon>
        <taxon>Metazoa</taxon>
        <taxon>Ecdysozoa</taxon>
        <taxon>Nematoda</taxon>
        <taxon>Chromadorea</taxon>
        <taxon>Rhabditida</taxon>
        <taxon>Rhabditina</taxon>
        <taxon>Rhabditomorpha</taxon>
        <taxon>Rhabditoidea</taxon>
        <taxon>Rhabditidae</taxon>
        <taxon>Peloderinae</taxon>
        <taxon>Caenorhabditis</taxon>
    </lineage>
</organism>
<proteinExistence type="evidence at protein level"/>
<feature type="chain" id="PRO_0000142456" description="Eukaryotic translation initiation factor 5A-1">
    <location>
        <begin position="1"/>
        <end position="161"/>
    </location>
</feature>
<feature type="modified residue" description="Hypusine" evidence="2">
    <location>
        <position position="54"/>
    </location>
</feature>
<keyword id="KW-0963">Cytoplasm</keyword>
<keyword id="KW-0251">Elongation factor</keyword>
<keyword id="KW-0385">Hypusine</keyword>
<keyword id="KW-0648">Protein biosynthesis</keyword>
<keyword id="KW-1185">Reference proteome</keyword>
<keyword id="KW-0694">RNA-binding</keyword>
<reference key="1">
    <citation type="journal article" date="1994" name="Nature">
        <title>2.2 Mb of contiguous nucleotide sequence from chromosome III of C. elegans.</title>
        <authorList>
            <person name="Wilson R."/>
            <person name="Ainscough R."/>
            <person name="Anderson K."/>
            <person name="Baynes C."/>
            <person name="Berks M."/>
            <person name="Bonfield J."/>
            <person name="Burton J."/>
            <person name="Connell M."/>
            <person name="Copsey T."/>
            <person name="Cooper J."/>
            <person name="Coulson A."/>
            <person name="Craxton M."/>
            <person name="Dear S."/>
            <person name="Du Z."/>
            <person name="Durbin R."/>
            <person name="Favello A."/>
            <person name="Fraser A."/>
            <person name="Fulton L."/>
            <person name="Gardner A."/>
            <person name="Green P."/>
            <person name="Hawkins T."/>
            <person name="Hillier L."/>
            <person name="Jier M."/>
            <person name="Johnston L."/>
            <person name="Jones M."/>
            <person name="Kershaw J."/>
            <person name="Kirsten J."/>
            <person name="Laisster N."/>
            <person name="Latreille P."/>
            <person name="Lightning J."/>
            <person name="Lloyd C."/>
            <person name="Mortimore B."/>
            <person name="O'Callaghan M."/>
            <person name="Parsons J."/>
            <person name="Percy C."/>
            <person name="Rifken L."/>
            <person name="Roopra A."/>
            <person name="Saunders D."/>
            <person name="Shownkeen R."/>
            <person name="Sims M."/>
            <person name="Smaldon N."/>
            <person name="Smith A."/>
            <person name="Smith M."/>
            <person name="Sonnhammer E."/>
            <person name="Staden R."/>
            <person name="Sulston J."/>
            <person name="Thierry-Mieg J."/>
            <person name="Thomas K."/>
            <person name="Vaudin M."/>
            <person name="Vaughan K."/>
            <person name="Waterston R."/>
            <person name="Watson A."/>
            <person name="Weinstock L."/>
            <person name="Wilkinson-Sproat J."/>
            <person name="Wohldman P."/>
        </authorList>
    </citation>
    <scope>NUCLEOTIDE SEQUENCE [LARGE SCALE GENOMIC DNA]</scope>
    <source>
        <strain>Bristol N2</strain>
    </source>
</reference>
<reference key="2">
    <citation type="journal article" date="1998" name="Science">
        <title>Genome sequence of the nematode C. elegans: a platform for investigating biology.</title>
        <authorList>
            <consortium name="The C. elegans sequencing consortium"/>
        </authorList>
    </citation>
    <scope>NUCLEOTIDE SEQUENCE [LARGE SCALE GENOMIC DNA]</scope>
    <source>
        <strain>Bristol N2</strain>
    </source>
</reference>
<reference key="3">
    <citation type="journal article" date="2004" name="Mech. Dev.">
        <title>The Caenorhabditis elegans eukaryotic initiation factor 5A homologue, IFF-1, is required for germ cell proliferation, gametogenesis and localization of the P-granule component PGL-1.</title>
        <authorList>
            <person name="Hanazawa M."/>
            <person name="Kawasaki I."/>
            <person name="Kunitomo H."/>
            <person name="Gengyo-Ando K."/>
            <person name="Bennett K.L."/>
            <person name="Mitani S."/>
            <person name="Iino Y."/>
        </authorList>
    </citation>
    <scope>FUNCTION</scope>
    <scope>TISSUE SPECIFICITY</scope>
    <scope>DEVELOPMENTAL STAGE</scope>
</reference>
<gene>
    <name type="primary">iff-1</name>
    <name type="ORF">T05G5.10</name>
</gene>
<accession>P34563</accession>
<sequence length="161" mass="17867">MSEDHHDEEQFDSAESGAAATFPKQCSALRKNEHVMIRGRPCKIVEMSTSKTGKHGHAKVHMVAIDIFTTKKLEDICPSTHNMDVPVVKRREYILMSIEDGFCSLMDPESCELKDDLKMPEGDLGNTIREALEKDEGSVLVQVVAACGEEAILGYKISTKE</sequence>
<evidence type="ECO:0000250" key="1">
    <source>
        <dbReference type="UniProtKB" id="P23301"/>
    </source>
</evidence>
<evidence type="ECO:0000250" key="2">
    <source>
        <dbReference type="UniProtKB" id="P63241"/>
    </source>
</evidence>
<evidence type="ECO:0000269" key="3">
    <source>
    </source>
</evidence>
<evidence type="ECO:0000305" key="4"/>
<comment type="function">
    <text evidence="1 3">Translation factor that promotes translation elongation and termination, particularly upon ribosome stalling at specific amino acid sequence contexts (By similarity). Binds between the exit (E) and peptidyl (P) site of the ribosome and promotes rescue of stalled ribosome: specifically required for efficient translation of polyproline-containing peptides as well as other motifs that stall the ribosome (By similarity). Acts as a ribosome quality control (RQC) cofactor by joining the RQC complex to facilitate peptidyl transfer during CAT tailing step (By similarity). Required for mitotic germ cell proliferation, gametogenesis after entry into meiosis, and localization of the P granule component pgl-1 on P granules (PubMed:15003625).</text>
</comment>
<comment type="interaction">
    <interactant intactId="EBI-327278">
        <id>P34563</id>
    </interactant>
    <interactant intactId="EBI-322139">
        <id>Q9XXJ0</id>
        <label>dhps-1</label>
    </interactant>
    <organismsDiffer>false</organismsDiffer>
    <experiments>3</experiments>
</comment>
<comment type="subcellular location">
    <subcellularLocation>
        <location evidence="1">Cytoplasm</location>
    </subcellularLocation>
</comment>
<comment type="tissue specificity">
    <text evidence="3">Expressed specifically in the germline in the distal region of gonads where germ cells actively proliferate.</text>
</comment>
<comment type="developmental stage">
    <text evidence="3">Present at late larval stages and adults.</text>
</comment>
<comment type="PTM">
    <text evidence="2">Lys-54 undergoes hypusination, a unique post-translational modification that consists in the addition of a butylamino group from spermidine to lysine side chain, leading to the formation of the unusual amino acid hypusine. eIF-5As are the only known proteins to undergo this modification, which is essential for their function.</text>
</comment>
<comment type="similarity">
    <text evidence="4">Belongs to the eIF-5A family.</text>
</comment>
<comment type="sequence caution" evidence="4">
    <conflict type="erroneous initiation">
        <sequence resource="EMBL-CDS" id="CAA81597"/>
    </conflict>
</comment>
<dbReference type="EMBL" id="Z27079">
    <property type="protein sequence ID" value="CAA81597.2"/>
    <property type="status" value="ALT_INIT"/>
    <property type="molecule type" value="Genomic_DNA"/>
</dbReference>
<dbReference type="PIR" id="S41010">
    <property type="entry name" value="S41010"/>
</dbReference>
<dbReference type="RefSeq" id="NP_001255020.1">
    <property type="nucleotide sequence ID" value="NM_001268091.1"/>
</dbReference>
<dbReference type="RefSeq" id="NP_001255021.1">
    <property type="nucleotide sequence ID" value="NM_001268092.3"/>
</dbReference>
<dbReference type="SMR" id="P34563"/>
<dbReference type="BioGRID" id="41568">
    <property type="interactions" value="17"/>
</dbReference>
<dbReference type="DIP" id="DIP-25111N"/>
<dbReference type="FunCoup" id="P34563">
    <property type="interactions" value="1797"/>
</dbReference>
<dbReference type="IntAct" id="P34563">
    <property type="interactions" value="7"/>
</dbReference>
<dbReference type="STRING" id="6239.T05G5.10a.1"/>
<dbReference type="PaxDb" id="6239-T05G5.10a"/>
<dbReference type="EnsemblMetazoa" id="T05G5.10a.1">
    <property type="protein sequence ID" value="T05G5.10a.1"/>
    <property type="gene ID" value="WBGene00002064"/>
</dbReference>
<dbReference type="GeneID" id="176373"/>
<dbReference type="KEGG" id="cel:CELE_T05G5.10"/>
<dbReference type="UCSC" id="T05G5.10">
    <property type="organism name" value="c. elegans"/>
</dbReference>
<dbReference type="AGR" id="WB:WBGene00002064"/>
<dbReference type="CTD" id="176373"/>
<dbReference type="WormBase" id="T05G5.10a">
    <property type="protein sequence ID" value="CE37787"/>
    <property type="gene ID" value="WBGene00002064"/>
    <property type="gene designation" value="iff-1"/>
</dbReference>
<dbReference type="eggNOG" id="KOG3271">
    <property type="taxonomic scope" value="Eukaryota"/>
</dbReference>
<dbReference type="GeneTree" id="ENSGT00390000003738"/>
<dbReference type="HOGENOM" id="CLU_102600_0_0_1"/>
<dbReference type="InParanoid" id="P34563"/>
<dbReference type="OrthoDB" id="9975114at2759"/>
<dbReference type="PhylomeDB" id="P34563"/>
<dbReference type="Reactome" id="R-CEL-204626">
    <property type="pathway name" value="Hypusine synthesis from eIF5A-lysine"/>
</dbReference>
<dbReference type="PRO" id="PR:P34563"/>
<dbReference type="Proteomes" id="UP000001940">
    <property type="component" value="Chromosome III"/>
</dbReference>
<dbReference type="Bgee" id="WBGene00002064">
    <property type="expression patterns" value="Expressed in germ line (C elegans) and 5 other cell types or tissues"/>
</dbReference>
<dbReference type="ExpressionAtlas" id="P34563">
    <property type="expression patterns" value="baseline and differential"/>
</dbReference>
<dbReference type="GO" id="GO:0005737">
    <property type="term" value="C:cytoplasm"/>
    <property type="evidence" value="ECO:0007669"/>
    <property type="project" value="UniProtKB-SubCell"/>
</dbReference>
<dbReference type="GO" id="GO:0043022">
    <property type="term" value="F:ribosome binding"/>
    <property type="evidence" value="ECO:0007669"/>
    <property type="project" value="InterPro"/>
</dbReference>
<dbReference type="GO" id="GO:0003723">
    <property type="term" value="F:RNA binding"/>
    <property type="evidence" value="ECO:0007669"/>
    <property type="project" value="UniProtKB-KW"/>
</dbReference>
<dbReference type="GO" id="GO:0003746">
    <property type="term" value="F:translation elongation factor activity"/>
    <property type="evidence" value="ECO:0000318"/>
    <property type="project" value="GO_Central"/>
</dbReference>
<dbReference type="GO" id="GO:0007276">
    <property type="term" value="P:gamete generation"/>
    <property type="evidence" value="ECO:0000315"/>
    <property type="project" value="WormBase"/>
</dbReference>
<dbReference type="GO" id="GO:0045901">
    <property type="term" value="P:positive regulation of translational elongation"/>
    <property type="evidence" value="ECO:0007669"/>
    <property type="project" value="InterPro"/>
</dbReference>
<dbReference type="GO" id="GO:0045905">
    <property type="term" value="P:positive regulation of translational termination"/>
    <property type="evidence" value="ECO:0007669"/>
    <property type="project" value="InterPro"/>
</dbReference>
<dbReference type="GO" id="GO:0008104">
    <property type="term" value="P:protein localization"/>
    <property type="evidence" value="ECO:0000315"/>
    <property type="project" value="WormBase"/>
</dbReference>
<dbReference type="GO" id="GO:0006414">
    <property type="term" value="P:translational elongation"/>
    <property type="evidence" value="ECO:0000318"/>
    <property type="project" value="GO_Central"/>
</dbReference>
<dbReference type="CDD" id="cd04468">
    <property type="entry name" value="S1_eIF5A"/>
    <property type="match status" value="1"/>
</dbReference>
<dbReference type="FunFam" id="2.30.30.30:FF:000007">
    <property type="entry name" value="Eukaryotic translation initiation factor 5A"/>
    <property type="match status" value="1"/>
</dbReference>
<dbReference type="FunFam" id="2.40.50.140:FF:000034">
    <property type="entry name" value="Eukaryotic translation initiation factor 5A"/>
    <property type="match status" value="1"/>
</dbReference>
<dbReference type="Gene3D" id="2.30.30.30">
    <property type="match status" value="1"/>
</dbReference>
<dbReference type="Gene3D" id="2.40.50.140">
    <property type="entry name" value="Nucleic acid-binding proteins"/>
    <property type="match status" value="1"/>
</dbReference>
<dbReference type="InterPro" id="IPR001884">
    <property type="entry name" value="IF5A-like"/>
</dbReference>
<dbReference type="InterPro" id="IPR048670">
    <property type="entry name" value="IF5A-like_N"/>
</dbReference>
<dbReference type="InterPro" id="IPR012340">
    <property type="entry name" value="NA-bd_OB-fold"/>
</dbReference>
<dbReference type="InterPro" id="IPR014722">
    <property type="entry name" value="Rib_uL2_dom2"/>
</dbReference>
<dbReference type="InterPro" id="IPR019769">
    <property type="entry name" value="Trans_elong_IF5A_hypusine_site"/>
</dbReference>
<dbReference type="InterPro" id="IPR020189">
    <property type="entry name" value="Transl_elong_IF5A_C"/>
</dbReference>
<dbReference type="InterPro" id="IPR008991">
    <property type="entry name" value="Translation_prot_SH3-like_sf"/>
</dbReference>
<dbReference type="NCBIfam" id="TIGR00037">
    <property type="entry name" value="eIF_5A"/>
    <property type="match status" value="1"/>
</dbReference>
<dbReference type="PANTHER" id="PTHR11673">
    <property type="entry name" value="TRANSLATION INITIATION FACTOR 5A FAMILY MEMBER"/>
    <property type="match status" value="1"/>
</dbReference>
<dbReference type="Pfam" id="PF01287">
    <property type="entry name" value="eIF-5a"/>
    <property type="match status" value="1"/>
</dbReference>
<dbReference type="Pfam" id="PF21485">
    <property type="entry name" value="IF5A-like_N"/>
    <property type="match status" value="1"/>
</dbReference>
<dbReference type="PIRSF" id="PIRSF003025">
    <property type="entry name" value="eIF5A"/>
    <property type="match status" value="1"/>
</dbReference>
<dbReference type="SMART" id="SM01376">
    <property type="entry name" value="eIF-5a"/>
    <property type="match status" value="1"/>
</dbReference>
<dbReference type="SUPFAM" id="SSF50249">
    <property type="entry name" value="Nucleic acid-binding proteins"/>
    <property type="match status" value="1"/>
</dbReference>
<dbReference type="SUPFAM" id="SSF50104">
    <property type="entry name" value="Translation proteins SH3-like domain"/>
    <property type="match status" value="1"/>
</dbReference>
<dbReference type="PROSITE" id="PS00302">
    <property type="entry name" value="IF5A_HYPUSINE"/>
    <property type="match status" value="1"/>
</dbReference>
<name>IF5A1_CAEEL</name>